<accession>A5IQ81</accession>
<reference key="1">
    <citation type="submission" date="2007-05" db="EMBL/GenBank/DDBJ databases">
        <title>Complete sequence of chromosome of Staphylococcus aureus subsp. aureus JH9.</title>
        <authorList>
            <consortium name="US DOE Joint Genome Institute"/>
            <person name="Copeland A."/>
            <person name="Lucas S."/>
            <person name="Lapidus A."/>
            <person name="Barry K."/>
            <person name="Detter J.C."/>
            <person name="Glavina del Rio T."/>
            <person name="Hammon N."/>
            <person name="Israni S."/>
            <person name="Pitluck S."/>
            <person name="Chain P."/>
            <person name="Malfatti S."/>
            <person name="Shin M."/>
            <person name="Vergez L."/>
            <person name="Schmutz J."/>
            <person name="Larimer F."/>
            <person name="Land M."/>
            <person name="Hauser L."/>
            <person name="Kyrpides N."/>
            <person name="Kim E."/>
            <person name="Tomasz A."/>
            <person name="Richardson P."/>
        </authorList>
    </citation>
    <scope>NUCLEOTIDE SEQUENCE [LARGE SCALE GENOMIC DNA]</scope>
    <source>
        <strain>JH9</strain>
    </source>
</reference>
<name>SYE_STAA9</name>
<evidence type="ECO:0000255" key="1">
    <source>
        <dbReference type="HAMAP-Rule" id="MF_00022"/>
    </source>
</evidence>
<protein>
    <recommendedName>
        <fullName evidence="1">Glutamate--tRNA ligase</fullName>
        <ecNumber evidence="1">6.1.1.17</ecNumber>
    </recommendedName>
    <alternativeName>
        <fullName evidence="1">Glutamyl-tRNA synthetase</fullName>
        <shortName evidence="1">GluRS</shortName>
    </alternativeName>
</protein>
<keyword id="KW-0030">Aminoacyl-tRNA synthetase</keyword>
<keyword id="KW-0067">ATP-binding</keyword>
<keyword id="KW-0963">Cytoplasm</keyword>
<keyword id="KW-0436">Ligase</keyword>
<keyword id="KW-0547">Nucleotide-binding</keyword>
<keyword id="KW-0648">Protein biosynthesis</keyword>
<feature type="chain" id="PRO_1000074337" description="Glutamate--tRNA ligase">
    <location>
        <begin position="1"/>
        <end position="484"/>
    </location>
</feature>
<feature type="short sequence motif" description="'HIGH' region" evidence="1">
    <location>
        <begin position="11"/>
        <end position="21"/>
    </location>
</feature>
<feature type="short sequence motif" description="'KMSKS' region" evidence="1">
    <location>
        <begin position="252"/>
        <end position="256"/>
    </location>
</feature>
<feature type="binding site" evidence="1">
    <location>
        <position position="255"/>
    </location>
    <ligand>
        <name>ATP</name>
        <dbReference type="ChEBI" id="CHEBI:30616"/>
    </ligand>
</feature>
<proteinExistence type="inferred from homology"/>
<comment type="function">
    <text evidence="1">Catalyzes the attachment of glutamate to tRNA(Glu) in a two-step reaction: glutamate is first activated by ATP to form Glu-AMP and then transferred to the acceptor end of tRNA(Glu).</text>
</comment>
<comment type="catalytic activity">
    <reaction evidence="1">
        <text>tRNA(Glu) + L-glutamate + ATP = L-glutamyl-tRNA(Glu) + AMP + diphosphate</text>
        <dbReference type="Rhea" id="RHEA:23540"/>
        <dbReference type="Rhea" id="RHEA-COMP:9663"/>
        <dbReference type="Rhea" id="RHEA-COMP:9680"/>
        <dbReference type="ChEBI" id="CHEBI:29985"/>
        <dbReference type="ChEBI" id="CHEBI:30616"/>
        <dbReference type="ChEBI" id="CHEBI:33019"/>
        <dbReference type="ChEBI" id="CHEBI:78442"/>
        <dbReference type="ChEBI" id="CHEBI:78520"/>
        <dbReference type="ChEBI" id="CHEBI:456215"/>
        <dbReference type="EC" id="6.1.1.17"/>
    </reaction>
</comment>
<comment type="subunit">
    <text evidence="1">Monomer.</text>
</comment>
<comment type="subcellular location">
    <subcellularLocation>
        <location evidence="1">Cytoplasm</location>
    </subcellularLocation>
</comment>
<comment type="similarity">
    <text evidence="1">Belongs to the class-I aminoacyl-tRNA synthetase family. Glutamate--tRNA ligase type 1 subfamily.</text>
</comment>
<organism>
    <name type="scientific">Staphylococcus aureus (strain JH9)</name>
    <dbReference type="NCBI Taxonomy" id="359786"/>
    <lineage>
        <taxon>Bacteria</taxon>
        <taxon>Bacillati</taxon>
        <taxon>Bacillota</taxon>
        <taxon>Bacilli</taxon>
        <taxon>Bacillales</taxon>
        <taxon>Staphylococcaceae</taxon>
        <taxon>Staphylococcus</taxon>
    </lineage>
</organism>
<dbReference type="EC" id="6.1.1.17" evidence="1"/>
<dbReference type="EMBL" id="CP000703">
    <property type="protein sequence ID" value="ABQ48354.1"/>
    <property type="molecule type" value="Genomic_DNA"/>
</dbReference>
<dbReference type="RefSeq" id="WP_001283792.1">
    <property type="nucleotide sequence ID" value="NC_009487.1"/>
</dbReference>
<dbReference type="SMR" id="A5IQ81"/>
<dbReference type="KEGG" id="saj:SaurJH9_0550"/>
<dbReference type="HOGENOM" id="CLU_015768_6_1_9"/>
<dbReference type="GO" id="GO:0005829">
    <property type="term" value="C:cytosol"/>
    <property type="evidence" value="ECO:0007669"/>
    <property type="project" value="TreeGrafter"/>
</dbReference>
<dbReference type="GO" id="GO:0005524">
    <property type="term" value="F:ATP binding"/>
    <property type="evidence" value="ECO:0007669"/>
    <property type="project" value="UniProtKB-UniRule"/>
</dbReference>
<dbReference type="GO" id="GO:0004818">
    <property type="term" value="F:glutamate-tRNA ligase activity"/>
    <property type="evidence" value="ECO:0007669"/>
    <property type="project" value="UniProtKB-UniRule"/>
</dbReference>
<dbReference type="GO" id="GO:0000049">
    <property type="term" value="F:tRNA binding"/>
    <property type="evidence" value="ECO:0007669"/>
    <property type="project" value="InterPro"/>
</dbReference>
<dbReference type="GO" id="GO:0008270">
    <property type="term" value="F:zinc ion binding"/>
    <property type="evidence" value="ECO:0007669"/>
    <property type="project" value="InterPro"/>
</dbReference>
<dbReference type="GO" id="GO:0006424">
    <property type="term" value="P:glutamyl-tRNA aminoacylation"/>
    <property type="evidence" value="ECO:0007669"/>
    <property type="project" value="UniProtKB-UniRule"/>
</dbReference>
<dbReference type="CDD" id="cd00808">
    <property type="entry name" value="GluRS_core"/>
    <property type="match status" value="1"/>
</dbReference>
<dbReference type="FunFam" id="1.10.10.350:FF:000002">
    <property type="entry name" value="Glutamate--tRNA ligase"/>
    <property type="match status" value="1"/>
</dbReference>
<dbReference type="FunFam" id="3.40.50.620:FF:000007">
    <property type="entry name" value="Glutamate--tRNA ligase"/>
    <property type="match status" value="1"/>
</dbReference>
<dbReference type="Gene3D" id="1.10.10.350">
    <property type="match status" value="1"/>
</dbReference>
<dbReference type="Gene3D" id="3.40.50.620">
    <property type="entry name" value="HUPs"/>
    <property type="match status" value="1"/>
</dbReference>
<dbReference type="HAMAP" id="MF_00022">
    <property type="entry name" value="Glu_tRNA_synth_type1"/>
    <property type="match status" value="1"/>
</dbReference>
<dbReference type="InterPro" id="IPR045462">
    <property type="entry name" value="aa-tRNA-synth_I_cd-bd"/>
</dbReference>
<dbReference type="InterPro" id="IPR020751">
    <property type="entry name" value="aa-tRNA-synth_I_codon-bd_sub2"/>
</dbReference>
<dbReference type="InterPro" id="IPR001412">
    <property type="entry name" value="aa-tRNA-synth_I_CS"/>
</dbReference>
<dbReference type="InterPro" id="IPR008925">
    <property type="entry name" value="aa_tRNA-synth_I_cd-bd_sf"/>
</dbReference>
<dbReference type="InterPro" id="IPR004527">
    <property type="entry name" value="Glu-tRNA-ligase_bac/mito"/>
</dbReference>
<dbReference type="InterPro" id="IPR000924">
    <property type="entry name" value="Glu/Gln-tRNA-synth"/>
</dbReference>
<dbReference type="InterPro" id="IPR020058">
    <property type="entry name" value="Glu/Gln-tRNA-synth_Ib_cat-dom"/>
</dbReference>
<dbReference type="InterPro" id="IPR049940">
    <property type="entry name" value="GluQ/Sye"/>
</dbReference>
<dbReference type="InterPro" id="IPR033910">
    <property type="entry name" value="GluRS_core"/>
</dbReference>
<dbReference type="InterPro" id="IPR014729">
    <property type="entry name" value="Rossmann-like_a/b/a_fold"/>
</dbReference>
<dbReference type="NCBIfam" id="TIGR00464">
    <property type="entry name" value="gltX_bact"/>
    <property type="match status" value="1"/>
</dbReference>
<dbReference type="PANTHER" id="PTHR43311">
    <property type="entry name" value="GLUTAMATE--TRNA LIGASE"/>
    <property type="match status" value="1"/>
</dbReference>
<dbReference type="PANTHER" id="PTHR43311:SF2">
    <property type="entry name" value="GLUTAMATE--TRNA LIGASE, MITOCHONDRIAL-RELATED"/>
    <property type="match status" value="1"/>
</dbReference>
<dbReference type="Pfam" id="PF19269">
    <property type="entry name" value="Anticodon_2"/>
    <property type="match status" value="1"/>
</dbReference>
<dbReference type="Pfam" id="PF00749">
    <property type="entry name" value="tRNA-synt_1c"/>
    <property type="match status" value="1"/>
</dbReference>
<dbReference type="PRINTS" id="PR00987">
    <property type="entry name" value="TRNASYNTHGLU"/>
</dbReference>
<dbReference type="SUPFAM" id="SSF48163">
    <property type="entry name" value="An anticodon-binding domain of class I aminoacyl-tRNA synthetases"/>
    <property type="match status" value="1"/>
</dbReference>
<dbReference type="SUPFAM" id="SSF52374">
    <property type="entry name" value="Nucleotidylyl transferase"/>
    <property type="match status" value="1"/>
</dbReference>
<dbReference type="PROSITE" id="PS00178">
    <property type="entry name" value="AA_TRNA_LIGASE_I"/>
    <property type="match status" value="1"/>
</dbReference>
<gene>
    <name evidence="1" type="primary">gltX</name>
    <name type="ordered locus">SaurJH9_0550</name>
</gene>
<sequence>MSDRIRVRYAPSPTGYLHIGNARTALFNYLYAKHYNGDFVIRIEDTDKKRNLEDGETSQFDNLKWLGLDWDESVDKDNGYGPYRQSERQHIYQPLIDQLLAEDKAYKCYMTEEELEAEREAQIARGEMPRYGGQHAHLTEEQRQQFEAEGRQPSIRFRVPQNQTYSFDDMVKGNISFDSNGIGDWVIVKKDGIPTYNFAVAIDDHYMQISDVIRGDDHISNTPKQIMIYEAFGWEPPRFGHMSLIVNEERKKLSKRDGQILQFIEQYRDLGYLPEALFNFIALLGWSPEGEEEIFSKEEFIKIFDEKRLSKSPAFFDKQKLAWVNNQYMKQKDTETVFQLALPHLIKANLIPEVPSEEDLSWGRKLIALYQKEMSYAGEIVPLSEMFFKEMPALGEEEQQVINGEQVPELMTHLFSKLEALEPFEAAEIKKTIKEVQKETGIKGKQLFMPIRVAVTGQMHGPELPNTIEVLGKEKVLNRLKQYK</sequence>